<evidence type="ECO:0000255" key="1">
    <source>
        <dbReference type="HAMAP-Rule" id="MF_00473"/>
    </source>
</evidence>
<gene>
    <name evidence="1" type="primary">pgi</name>
    <name type="ordered locus">SAHV_0957</name>
</gene>
<feature type="chain" id="PRO_1000014025" description="Glucose-6-phosphate isomerase">
    <location>
        <begin position="1"/>
        <end position="443"/>
    </location>
</feature>
<feature type="active site" description="Proton donor" evidence="1">
    <location>
        <position position="285"/>
    </location>
</feature>
<feature type="active site" evidence="1">
    <location>
        <position position="306"/>
    </location>
</feature>
<feature type="active site" evidence="1">
    <location>
        <position position="420"/>
    </location>
</feature>
<sequence>MTHIQLDFSKTLEFFGEHELKQQQEIVKSIHKTIHEGTGAGSDFLGWVDLPVDYDKEEFSRIVEASKRIKENSDVLVVIGIGGSYLGARAAIEMLTSSFRNSNEYPEIVFVGNHLSSTYTKELVDYLADKDFSVNVISKSGTTTEPAVAFRLFKQLVEERYGKEEAQKRIFATTDKEKGALKQLATNEGYETFIVPDDVGGRYSVLTAVGLLPIATAGINIEAMMIGAAKAREELSSDKLEDNIAYQYATIRNILYAKGYTTEMLINYEPSMQYFNEWWKQLFGESEGKDFKGIYPSSANYTTDLHSLGQYVQEGRRFLFETVVKVNHPKYDITIEKDSDDLDGLNYLAGKTIDEVNTKAFEGTLLAHTDGGVPNMVVNIPQLDEETFGYVVYFFELACAMSGYQLGVNPFNQPGVEAYKQNMFALLGKPGFEDLKKELEERL</sequence>
<protein>
    <recommendedName>
        <fullName evidence="1">Glucose-6-phosphate isomerase</fullName>
        <shortName evidence="1">GPI</shortName>
        <ecNumber evidence="1">5.3.1.9</ecNumber>
    </recommendedName>
    <alternativeName>
        <fullName evidence="1">Phosphoglucose isomerase</fullName>
        <shortName evidence="1">PGI</shortName>
    </alternativeName>
    <alternativeName>
        <fullName evidence="1">Phosphohexose isomerase</fullName>
        <shortName evidence="1">PHI</shortName>
    </alternativeName>
</protein>
<organism>
    <name type="scientific">Staphylococcus aureus (strain Mu3 / ATCC 700698)</name>
    <dbReference type="NCBI Taxonomy" id="418127"/>
    <lineage>
        <taxon>Bacteria</taxon>
        <taxon>Bacillati</taxon>
        <taxon>Bacillota</taxon>
        <taxon>Bacilli</taxon>
        <taxon>Bacillales</taxon>
        <taxon>Staphylococcaceae</taxon>
        <taxon>Staphylococcus</taxon>
    </lineage>
</organism>
<name>G6PI_STAA1</name>
<dbReference type="EC" id="5.3.1.9" evidence="1"/>
<dbReference type="EMBL" id="AP009324">
    <property type="protein sequence ID" value="BAF77840.1"/>
    <property type="molecule type" value="Genomic_DNA"/>
</dbReference>
<dbReference type="RefSeq" id="WP_000148852.1">
    <property type="nucleotide sequence ID" value="NC_009782.1"/>
</dbReference>
<dbReference type="SMR" id="A7X0H6"/>
<dbReference type="KEGG" id="saw:SAHV_0957"/>
<dbReference type="HOGENOM" id="CLU_037303_0_1_9"/>
<dbReference type="UniPathway" id="UPA00109">
    <property type="reaction ID" value="UER00181"/>
</dbReference>
<dbReference type="UniPathway" id="UPA00138"/>
<dbReference type="GO" id="GO:0005829">
    <property type="term" value="C:cytosol"/>
    <property type="evidence" value="ECO:0007669"/>
    <property type="project" value="TreeGrafter"/>
</dbReference>
<dbReference type="GO" id="GO:0097367">
    <property type="term" value="F:carbohydrate derivative binding"/>
    <property type="evidence" value="ECO:0007669"/>
    <property type="project" value="InterPro"/>
</dbReference>
<dbReference type="GO" id="GO:0004347">
    <property type="term" value="F:glucose-6-phosphate isomerase activity"/>
    <property type="evidence" value="ECO:0007669"/>
    <property type="project" value="UniProtKB-UniRule"/>
</dbReference>
<dbReference type="GO" id="GO:0048029">
    <property type="term" value="F:monosaccharide binding"/>
    <property type="evidence" value="ECO:0007669"/>
    <property type="project" value="TreeGrafter"/>
</dbReference>
<dbReference type="GO" id="GO:0006094">
    <property type="term" value="P:gluconeogenesis"/>
    <property type="evidence" value="ECO:0007669"/>
    <property type="project" value="UniProtKB-UniRule"/>
</dbReference>
<dbReference type="GO" id="GO:0051156">
    <property type="term" value="P:glucose 6-phosphate metabolic process"/>
    <property type="evidence" value="ECO:0007669"/>
    <property type="project" value="TreeGrafter"/>
</dbReference>
<dbReference type="GO" id="GO:0006096">
    <property type="term" value="P:glycolytic process"/>
    <property type="evidence" value="ECO:0007669"/>
    <property type="project" value="UniProtKB-UniRule"/>
</dbReference>
<dbReference type="CDD" id="cd05015">
    <property type="entry name" value="SIS_PGI_1"/>
    <property type="match status" value="1"/>
</dbReference>
<dbReference type="CDD" id="cd05016">
    <property type="entry name" value="SIS_PGI_2"/>
    <property type="match status" value="1"/>
</dbReference>
<dbReference type="FunFam" id="3.40.50.10490:FF:000015">
    <property type="entry name" value="Glucose-6-phosphate isomerase"/>
    <property type="match status" value="1"/>
</dbReference>
<dbReference type="FunFam" id="3.40.50.10490:FF:000016">
    <property type="entry name" value="Glucose-6-phosphate isomerase"/>
    <property type="match status" value="1"/>
</dbReference>
<dbReference type="Gene3D" id="3.40.50.10490">
    <property type="entry name" value="Glucose-6-phosphate isomerase like protein, domain 1"/>
    <property type="match status" value="3"/>
</dbReference>
<dbReference type="HAMAP" id="MF_00473">
    <property type="entry name" value="G6P_isomerase"/>
    <property type="match status" value="1"/>
</dbReference>
<dbReference type="InterPro" id="IPR001672">
    <property type="entry name" value="G6P_Isomerase"/>
</dbReference>
<dbReference type="InterPro" id="IPR018189">
    <property type="entry name" value="Phosphoglucose_isomerase_CS"/>
</dbReference>
<dbReference type="InterPro" id="IPR046348">
    <property type="entry name" value="SIS_dom_sf"/>
</dbReference>
<dbReference type="InterPro" id="IPR035476">
    <property type="entry name" value="SIS_PGI_1"/>
</dbReference>
<dbReference type="InterPro" id="IPR035482">
    <property type="entry name" value="SIS_PGI_2"/>
</dbReference>
<dbReference type="NCBIfam" id="NF010697">
    <property type="entry name" value="PRK14097.1"/>
    <property type="match status" value="1"/>
</dbReference>
<dbReference type="PANTHER" id="PTHR11469">
    <property type="entry name" value="GLUCOSE-6-PHOSPHATE ISOMERASE"/>
    <property type="match status" value="1"/>
</dbReference>
<dbReference type="PANTHER" id="PTHR11469:SF1">
    <property type="entry name" value="GLUCOSE-6-PHOSPHATE ISOMERASE"/>
    <property type="match status" value="1"/>
</dbReference>
<dbReference type="Pfam" id="PF00342">
    <property type="entry name" value="PGI"/>
    <property type="match status" value="1"/>
</dbReference>
<dbReference type="PRINTS" id="PR00662">
    <property type="entry name" value="G6PISOMERASE"/>
</dbReference>
<dbReference type="SUPFAM" id="SSF53697">
    <property type="entry name" value="SIS domain"/>
    <property type="match status" value="1"/>
</dbReference>
<dbReference type="PROSITE" id="PS00765">
    <property type="entry name" value="P_GLUCOSE_ISOMERASE_1"/>
    <property type="match status" value="1"/>
</dbReference>
<dbReference type="PROSITE" id="PS00174">
    <property type="entry name" value="P_GLUCOSE_ISOMERASE_2"/>
    <property type="match status" value="1"/>
</dbReference>
<dbReference type="PROSITE" id="PS51463">
    <property type="entry name" value="P_GLUCOSE_ISOMERASE_3"/>
    <property type="match status" value="1"/>
</dbReference>
<comment type="function">
    <text evidence="1">Catalyzes the reversible isomerization of glucose-6-phosphate to fructose-6-phosphate.</text>
</comment>
<comment type="catalytic activity">
    <reaction evidence="1">
        <text>alpha-D-glucose 6-phosphate = beta-D-fructose 6-phosphate</text>
        <dbReference type="Rhea" id="RHEA:11816"/>
        <dbReference type="ChEBI" id="CHEBI:57634"/>
        <dbReference type="ChEBI" id="CHEBI:58225"/>
        <dbReference type="EC" id="5.3.1.9"/>
    </reaction>
</comment>
<comment type="pathway">
    <text evidence="1">Carbohydrate biosynthesis; gluconeogenesis.</text>
</comment>
<comment type="pathway">
    <text evidence="1">Carbohydrate degradation; glycolysis; D-glyceraldehyde 3-phosphate and glycerone phosphate from D-glucose: step 2/4.</text>
</comment>
<comment type="subcellular location">
    <subcellularLocation>
        <location evidence="1">Cytoplasm</location>
    </subcellularLocation>
</comment>
<comment type="similarity">
    <text evidence="1">Belongs to the GPI family.</text>
</comment>
<accession>A7X0H6</accession>
<keyword id="KW-0963">Cytoplasm</keyword>
<keyword id="KW-0312">Gluconeogenesis</keyword>
<keyword id="KW-0324">Glycolysis</keyword>
<keyword id="KW-0413">Isomerase</keyword>
<proteinExistence type="inferred from homology"/>
<reference key="1">
    <citation type="journal article" date="2008" name="Antimicrob. Agents Chemother.">
        <title>Mutated response regulator graR is responsible for phenotypic conversion of Staphylococcus aureus from heterogeneous vancomycin-intermediate resistance to vancomycin-intermediate resistance.</title>
        <authorList>
            <person name="Neoh H.-M."/>
            <person name="Cui L."/>
            <person name="Yuzawa H."/>
            <person name="Takeuchi F."/>
            <person name="Matsuo M."/>
            <person name="Hiramatsu K."/>
        </authorList>
    </citation>
    <scope>NUCLEOTIDE SEQUENCE [LARGE SCALE GENOMIC DNA]</scope>
    <source>
        <strain>Mu3 / ATCC 700698</strain>
    </source>
</reference>